<evidence type="ECO:0000255" key="1">
    <source>
        <dbReference type="HAMAP-Rule" id="MF_00061"/>
    </source>
</evidence>
<comment type="function">
    <text evidence="1">Catalyzes the phosphorylation of the position 2 hydroxy group of 4-diphosphocytidyl-2C-methyl-D-erythritol.</text>
</comment>
<comment type="catalytic activity">
    <reaction evidence="1">
        <text>4-CDP-2-C-methyl-D-erythritol + ATP = 4-CDP-2-C-methyl-D-erythritol 2-phosphate + ADP + H(+)</text>
        <dbReference type="Rhea" id="RHEA:18437"/>
        <dbReference type="ChEBI" id="CHEBI:15378"/>
        <dbReference type="ChEBI" id="CHEBI:30616"/>
        <dbReference type="ChEBI" id="CHEBI:57823"/>
        <dbReference type="ChEBI" id="CHEBI:57919"/>
        <dbReference type="ChEBI" id="CHEBI:456216"/>
        <dbReference type="EC" id="2.7.1.148"/>
    </reaction>
</comment>
<comment type="pathway">
    <text evidence="1">Isoprenoid biosynthesis; isopentenyl diphosphate biosynthesis via DXP pathway; isopentenyl diphosphate from 1-deoxy-D-xylulose 5-phosphate: step 3/6.</text>
</comment>
<comment type="similarity">
    <text evidence="1">Belongs to the GHMP kinase family. IspE subfamily.</text>
</comment>
<feature type="chain" id="PRO_1000092104" description="4-diphosphocytidyl-2-C-methyl-D-erythritol kinase">
    <location>
        <begin position="1"/>
        <end position="286"/>
    </location>
</feature>
<feature type="active site" evidence="1">
    <location>
        <position position="11"/>
    </location>
</feature>
<feature type="active site" evidence="1">
    <location>
        <position position="135"/>
    </location>
</feature>
<feature type="binding site" evidence="1">
    <location>
        <begin position="93"/>
        <end position="103"/>
    </location>
    <ligand>
        <name>ATP</name>
        <dbReference type="ChEBI" id="CHEBI:30616"/>
    </ligand>
</feature>
<accession>B4S9D9</accession>
<reference key="1">
    <citation type="submission" date="2008-06" db="EMBL/GenBank/DDBJ databases">
        <title>Complete sequence of chromosome of Prosthecochloris aestuarii DSM 271.</title>
        <authorList>
            <consortium name="US DOE Joint Genome Institute"/>
            <person name="Lucas S."/>
            <person name="Copeland A."/>
            <person name="Lapidus A."/>
            <person name="Glavina del Rio T."/>
            <person name="Dalin E."/>
            <person name="Tice H."/>
            <person name="Bruce D."/>
            <person name="Goodwin L."/>
            <person name="Pitluck S."/>
            <person name="Schmutz J."/>
            <person name="Larimer F."/>
            <person name="Land M."/>
            <person name="Hauser L."/>
            <person name="Kyrpides N."/>
            <person name="Anderson I."/>
            <person name="Liu Z."/>
            <person name="Li T."/>
            <person name="Zhao F."/>
            <person name="Overmann J."/>
            <person name="Bryant D.A."/>
            <person name="Richardson P."/>
        </authorList>
    </citation>
    <scope>NUCLEOTIDE SEQUENCE [LARGE SCALE GENOMIC DNA]</scope>
    <source>
        <strain>DSM 271 / SK 413</strain>
    </source>
</reference>
<protein>
    <recommendedName>
        <fullName evidence="1">4-diphosphocytidyl-2-C-methyl-D-erythritol kinase</fullName>
        <shortName evidence="1">CMK</shortName>
        <ecNumber evidence="1">2.7.1.148</ecNumber>
    </recommendedName>
    <alternativeName>
        <fullName evidence="1">4-(cytidine-5'-diphospho)-2-C-methyl-D-erythritol kinase</fullName>
    </alternativeName>
</protein>
<gene>
    <name evidence="1" type="primary">ispE</name>
    <name type="ordered locus">Paes_1591</name>
</gene>
<organism>
    <name type="scientific">Prosthecochloris aestuarii (strain DSM 271 / SK 413)</name>
    <dbReference type="NCBI Taxonomy" id="290512"/>
    <lineage>
        <taxon>Bacteria</taxon>
        <taxon>Pseudomonadati</taxon>
        <taxon>Chlorobiota</taxon>
        <taxon>Chlorobiia</taxon>
        <taxon>Chlorobiales</taxon>
        <taxon>Chlorobiaceae</taxon>
        <taxon>Prosthecochloris</taxon>
    </lineage>
</organism>
<dbReference type="EC" id="2.7.1.148" evidence="1"/>
<dbReference type="EMBL" id="CP001108">
    <property type="protein sequence ID" value="ACF46609.1"/>
    <property type="molecule type" value="Genomic_DNA"/>
</dbReference>
<dbReference type="RefSeq" id="WP_012506142.1">
    <property type="nucleotide sequence ID" value="NC_011059.1"/>
</dbReference>
<dbReference type="SMR" id="B4S9D9"/>
<dbReference type="STRING" id="290512.Paes_1591"/>
<dbReference type="KEGG" id="paa:Paes_1591"/>
<dbReference type="eggNOG" id="COG1947">
    <property type="taxonomic scope" value="Bacteria"/>
</dbReference>
<dbReference type="HOGENOM" id="CLU_053057_3_0_10"/>
<dbReference type="UniPathway" id="UPA00056">
    <property type="reaction ID" value="UER00094"/>
</dbReference>
<dbReference type="Proteomes" id="UP000002725">
    <property type="component" value="Chromosome"/>
</dbReference>
<dbReference type="GO" id="GO:0050515">
    <property type="term" value="F:4-(cytidine 5'-diphospho)-2-C-methyl-D-erythritol kinase activity"/>
    <property type="evidence" value="ECO:0007669"/>
    <property type="project" value="UniProtKB-UniRule"/>
</dbReference>
<dbReference type="GO" id="GO:0005524">
    <property type="term" value="F:ATP binding"/>
    <property type="evidence" value="ECO:0007669"/>
    <property type="project" value="UniProtKB-UniRule"/>
</dbReference>
<dbReference type="GO" id="GO:0019288">
    <property type="term" value="P:isopentenyl diphosphate biosynthetic process, methylerythritol 4-phosphate pathway"/>
    <property type="evidence" value="ECO:0007669"/>
    <property type="project" value="UniProtKB-UniRule"/>
</dbReference>
<dbReference type="GO" id="GO:0016114">
    <property type="term" value="P:terpenoid biosynthetic process"/>
    <property type="evidence" value="ECO:0007669"/>
    <property type="project" value="InterPro"/>
</dbReference>
<dbReference type="Gene3D" id="3.30.230.10">
    <property type="match status" value="1"/>
</dbReference>
<dbReference type="Gene3D" id="3.30.70.890">
    <property type="entry name" value="GHMP kinase, C-terminal domain"/>
    <property type="match status" value="1"/>
</dbReference>
<dbReference type="HAMAP" id="MF_00061">
    <property type="entry name" value="IspE"/>
    <property type="match status" value="1"/>
</dbReference>
<dbReference type="InterPro" id="IPR013750">
    <property type="entry name" value="GHMP_kinase_C_dom"/>
</dbReference>
<dbReference type="InterPro" id="IPR036554">
    <property type="entry name" value="GHMP_kinase_C_sf"/>
</dbReference>
<dbReference type="InterPro" id="IPR006204">
    <property type="entry name" value="GHMP_kinase_N_dom"/>
</dbReference>
<dbReference type="InterPro" id="IPR004424">
    <property type="entry name" value="IspE"/>
</dbReference>
<dbReference type="InterPro" id="IPR020568">
    <property type="entry name" value="Ribosomal_Su5_D2-typ_SF"/>
</dbReference>
<dbReference type="InterPro" id="IPR014721">
    <property type="entry name" value="Ribsml_uS5_D2-typ_fold_subgr"/>
</dbReference>
<dbReference type="NCBIfam" id="TIGR00154">
    <property type="entry name" value="ispE"/>
    <property type="match status" value="1"/>
</dbReference>
<dbReference type="PANTHER" id="PTHR43527">
    <property type="entry name" value="4-DIPHOSPHOCYTIDYL-2-C-METHYL-D-ERYTHRITOL KINASE, CHLOROPLASTIC"/>
    <property type="match status" value="1"/>
</dbReference>
<dbReference type="PANTHER" id="PTHR43527:SF2">
    <property type="entry name" value="4-DIPHOSPHOCYTIDYL-2-C-METHYL-D-ERYTHRITOL KINASE, CHLOROPLASTIC"/>
    <property type="match status" value="1"/>
</dbReference>
<dbReference type="Pfam" id="PF08544">
    <property type="entry name" value="GHMP_kinases_C"/>
    <property type="match status" value="1"/>
</dbReference>
<dbReference type="Pfam" id="PF00288">
    <property type="entry name" value="GHMP_kinases_N"/>
    <property type="match status" value="1"/>
</dbReference>
<dbReference type="PIRSF" id="PIRSF010376">
    <property type="entry name" value="IspE"/>
    <property type="match status" value="1"/>
</dbReference>
<dbReference type="SUPFAM" id="SSF55060">
    <property type="entry name" value="GHMP Kinase, C-terminal domain"/>
    <property type="match status" value="1"/>
</dbReference>
<dbReference type="SUPFAM" id="SSF54211">
    <property type="entry name" value="Ribosomal protein S5 domain 2-like"/>
    <property type="match status" value="1"/>
</dbReference>
<sequence>MQSISVKAYAKINLGLLITGKRPDGYHTLETVFAPINWYDELTFSPSQEVRMSCTNQDLPCDDSNLCIRAAKALRDFSGVSSGVEIGLAKHIPFGAGLGGGSSDAASTLRVLNRMWNINASSHDLHRIAVGLGADVPYFLESGGLAYAAGIGEELEDLELTLPFSIVTLFPGDHISTVWAYRNFYACFEREIPDLKGLVRSLCQARDTSVLEVFDNDFEPVVFDHYPAVREAKDALVQSGSFFASLSGSGSAVFGLFENDSDAERAAEQLSATYRARFTPASFAMA</sequence>
<keyword id="KW-0067">ATP-binding</keyword>
<keyword id="KW-0414">Isoprene biosynthesis</keyword>
<keyword id="KW-0418">Kinase</keyword>
<keyword id="KW-0547">Nucleotide-binding</keyword>
<keyword id="KW-0808">Transferase</keyword>
<name>ISPE_PROA2</name>
<proteinExistence type="inferred from homology"/>